<sequence>MSETITVNCPTCGKTVVWGEISPFRPFCSKRCQLIDLGEWAAEEKRIPSSGDLSESDDWSEEPKQ</sequence>
<name>YACG_ECO57</name>
<organism>
    <name type="scientific">Escherichia coli O157:H7</name>
    <dbReference type="NCBI Taxonomy" id="83334"/>
    <lineage>
        <taxon>Bacteria</taxon>
        <taxon>Pseudomonadati</taxon>
        <taxon>Pseudomonadota</taxon>
        <taxon>Gammaproteobacteria</taxon>
        <taxon>Enterobacterales</taxon>
        <taxon>Enterobacteriaceae</taxon>
        <taxon>Escherichia</taxon>
    </lineage>
</organism>
<reference key="1">
    <citation type="journal article" date="2001" name="Nature">
        <title>Genome sequence of enterohaemorrhagic Escherichia coli O157:H7.</title>
        <authorList>
            <person name="Perna N.T."/>
            <person name="Plunkett G. III"/>
            <person name="Burland V."/>
            <person name="Mau B."/>
            <person name="Glasner J.D."/>
            <person name="Rose D.J."/>
            <person name="Mayhew G.F."/>
            <person name="Evans P.S."/>
            <person name="Gregor J."/>
            <person name="Kirkpatrick H.A."/>
            <person name="Posfai G."/>
            <person name="Hackett J."/>
            <person name="Klink S."/>
            <person name="Boutin A."/>
            <person name="Shao Y."/>
            <person name="Miller L."/>
            <person name="Grotbeck E.J."/>
            <person name="Davis N.W."/>
            <person name="Lim A."/>
            <person name="Dimalanta E.T."/>
            <person name="Potamousis K."/>
            <person name="Apodaca J."/>
            <person name="Anantharaman T.S."/>
            <person name="Lin J."/>
            <person name="Yen G."/>
            <person name="Schwartz D.C."/>
            <person name="Welch R.A."/>
            <person name="Blattner F.R."/>
        </authorList>
    </citation>
    <scope>NUCLEOTIDE SEQUENCE [LARGE SCALE GENOMIC DNA]</scope>
    <source>
        <strain>O157:H7 / EDL933 / ATCC 700927 / EHEC</strain>
    </source>
</reference>
<reference key="2">
    <citation type="journal article" date="2001" name="DNA Res.">
        <title>Complete genome sequence of enterohemorrhagic Escherichia coli O157:H7 and genomic comparison with a laboratory strain K-12.</title>
        <authorList>
            <person name="Hayashi T."/>
            <person name="Makino K."/>
            <person name="Ohnishi M."/>
            <person name="Kurokawa K."/>
            <person name="Ishii K."/>
            <person name="Yokoyama K."/>
            <person name="Han C.-G."/>
            <person name="Ohtsubo E."/>
            <person name="Nakayama K."/>
            <person name="Murata T."/>
            <person name="Tanaka M."/>
            <person name="Tobe T."/>
            <person name="Iida T."/>
            <person name="Takami H."/>
            <person name="Honda T."/>
            <person name="Sasakawa C."/>
            <person name="Ogasawara N."/>
            <person name="Yasunaga T."/>
            <person name="Kuhara S."/>
            <person name="Shiba T."/>
            <person name="Hattori M."/>
            <person name="Shinagawa H."/>
        </authorList>
    </citation>
    <scope>NUCLEOTIDE SEQUENCE [LARGE SCALE GENOMIC DNA]</scope>
    <source>
        <strain>O157:H7 / Sakai / RIMD 0509952 / EHEC</strain>
    </source>
</reference>
<accession>P0A8H9</accession>
<accession>P36681</accession>
<accession>P75644</accession>
<accession>Q8KJQ7</accession>
<gene>
    <name evidence="1" type="primary">yacG</name>
    <name type="ordered locus">Z0111</name>
    <name type="ordered locus">ECs0105</name>
</gene>
<keyword id="KW-0479">Metal-binding</keyword>
<keyword id="KW-1185">Reference proteome</keyword>
<keyword id="KW-0862">Zinc</keyword>
<proteinExistence type="inferred from homology"/>
<protein>
    <recommendedName>
        <fullName evidence="1">DNA gyrase inhibitor YacG</fullName>
    </recommendedName>
</protein>
<dbReference type="EMBL" id="AE005174">
    <property type="protein sequence ID" value="AAG54405.1"/>
    <property type="molecule type" value="Genomic_DNA"/>
</dbReference>
<dbReference type="EMBL" id="BA000007">
    <property type="protein sequence ID" value="BAB33528.1"/>
    <property type="molecule type" value="Genomic_DNA"/>
</dbReference>
<dbReference type="PIR" id="A85493">
    <property type="entry name" value="A85493"/>
</dbReference>
<dbReference type="PIR" id="A90642">
    <property type="entry name" value="A90642"/>
</dbReference>
<dbReference type="RefSeq" id="NP_308132.1">
    <property type="nucleotide sequence ID" value="NC_002695.1"/>
</dbReference>
<dbReference type="RefSeq" id="WP_000005042.1">
    <property type="nucleotide sequence ID" value="NZ_VOAI01000002.1"/>
</dbReference>
<dbReference type="SMR" id="P0A8H9"/>
<dbReference type="STRING" id="155864.Z0111"/>
<dbReference type="GeneID" id="913611"/>
<dbReference type="GeneID" id="93777334"/>
<dbReference type="KEGG" id="ece:Z0111"/>
<dbReference type="KEGG" id="ecs:ECs_0105"/>
<dbReference type="PATRIC" id="fig|386585.9.peg.204"/>
<dbReference type="eggNOG" id="COG3024">
    <property type="taxonomic scope" value="Bacteria"/>
</dbReference>
<dbReference type="HOGENOM" id="CLU_178280_3_1_6"/>
<dbReference type="OMA" id="WAAEEHK"/>
<dbReference type="Proteomes" id="UP000000558">
    <property type="component" value="Chromosome"/>
</dbReference>
<dbReference type="Proteomes" id="UP000002519">
    <property type="component" value="Chromosome"/>
</dbReference>
<dbReference type="GO" id="GO:0008657">
    <property type="term" value="F:DNA topoisomerase type II (double strand cut, ATP-hydrolyzing) inhibitor activity"/>
    <property type="evidence" value="ECO:0007669"/>
    <property type="project" value="UniProtKB-UniRule"/>
</dbReference>
<dbReference type="GO" id="GO:0008270">
    <property type="term" value="F:zinc ion binding"/>
    <property type="evidence" value="ECO:0007669"/>
    <property type="project" value="UniProtKB-UniRule"/>
</dbReference>
<dbReference type="GO" id="GO:0006355">
    <property type="term" value="P:regulation of DNA-templated transcription"/>
    <property type="evidence" value="ECO:0007669"/>
    <property type="project" value="InterPro"/>
</dbReference>
<dbReference type="DisProt" id="DP00202"/>
<dbReference type="FunFam" id="3.30.50.10:FF:000026">
    <property type="entry name" value="DNA gyrase inhibitor YacG"/>
    <property type="match status" value="1"/>
</dbReference>
<dbReference type="Gene3D" id="3.30.50.10">
    <property type="entry name" value="Erythroid Transcription Factor GATA-1, subunit A"/>
    <property type="match status" value="1"/>
</dbReference>
<dbReference type="HAMAP" id="MF_00649">
    <property type="entry name" value="DNA_gyrase_inhibitor_YacG"/>
    <property type="match status" value="1"/>
</dbReference>
<dbReference type="InterPro" id="IPR005584">
    <property type="entry name" value="DNA_gyrase_inhibitor_YacG"/>
</dbReference>
<dbReference type="InterPro" id="IPR013088">
    <property type="entry name" value="Znf_NHR/GATA"/>
</dbReference>
<dbReference type="NCBIfam" id="NF001638">
    <property type="entry name" value="PRK00418.1"/>
    <property type="match status" value="1"/>
</dbReference>
<dbReference type="PANTHER" id="PTHR36150">
    <property type="entry name" value="DNA GYRASE INHIBITOR YACG"/>
    <property type="match status" value="1"/>
</dbReference>
<dbReference type="PANTHER" id="PTHR36150:SF1">
    <property type="entry name" value="DNA GYRASE INHIBITOR YACG"/>
    <property type="match status" value="1"/>
</dbReference>
<dbReference type="Pfam" id="PF03884">
    <property type="entry name" value="YacG"/>
    <property type="match status" value="1"/>
</dbReference>
<dbReference type="SUPFAM" id="SSF57716">
    <property type="entry name" value="Glucocorticoid receptor-like (DNA-binding domain)"/>
    <property type="match status" value="1"/>
</dbReference>
<feature type="chain" id="PRO_0000211696" description="DNA gyrase inhibitor YacG">
    <location>
        <begin position="1"/>
        <end position="65"/>
    </location>
</feature>
<feature type="region of interest" description="Disordered" evidence="2">
    <location>
        <begin position="45"/>
        <end position="65"/>
    </location>
</feature>
<feature type="compositionally biased region" description="Acidic residues" evidence="2">
    <location>
        <begin position="54"/>
        <end position="65"/>
    </location>
</feature>
<feature type="binding site" evidence="1">
    <location>
        <position position="9"/>
    </location>
    <ligand>
        <name>Zn(2+)</name>
        <dbReference type="ChEBI" id="CHEBI:29105"/>
    </ligand>
</feature>
<feature type="binding site" evidence="1">
    <location>
        <position position="12"/>
    </location>
    <ligand>
        <name>Zn(2+)</name>
        <dbReference type="ChEBI" id="CHEBI:29105"/>
    </ligand>
</feature>
<feature type="binding site" evidence="1">
    <location>
        <position position="28"/>
    </location>
    <ligand>
        <name>Zn(2+)</name>
        <dbReference type="ChEBI" id="CHEBI:29105"/>
    </ligand>
</feature>
<feature type="binding site" evidence="1">
    <location>
        <position position="32"/>
    </location>
    <ligand>
        <name>Zn(2+)</name>
        <dbReference type="ChEBI" id="CHEBI:29105"/>
    </ligand>
</feature>
<comment type="function">
    <text evidence="1">Inhibits all the catalytic activities of DNA gyrase by preventing its interaction with DNA. Acts by binding directly to the C-terminal domain of GyrB, which probably disrupts DNA binding by the gyrase.</text>
</comment>
<comment type="cofactor">
    <cofactor evidence="1">
        <name>Zn(2+)</name>
        <dbReference type="ChEBI" id="CHEBI:29105"/>
    </cofactor>
    <text evidence="1">Binds 1 zinc ion.</text>
</comment>
<comment type="subunit">
    <text evidence="1">Interacts with GyrB.</text>
</comment>
<comment type="similarity">
    <text evidence="1">Belongs to the DNA gyrase inhibitor YacG family.</text>
</comment>
<evidence type="ECO:0000255" key="1">
    <source>
        <dbReference type="HAMAP-Rule" id="MF_00649"/>
    </source>
</evidence>
<evidence type="ECO:0000256" key="2">
    <source>
        <dbReference type="SAM" id="MobiDB-lite"/>
    </source>
</evidence>